<name>TRPR_SHISS</name>
<keyword id="KW-0963">Cytoplasm</keyword>
<keyword id="KW-0238">DNA-binding</keyword>
<keyword id="KW-1185">Reference proteome</keyword>
<keyword id="KW-0678">Repressor</keyword>
<keyword id="KW-0804">Transcription</keyword>
<keyword id="KW-0805">Transcription regulation</keyword>
<dbReference type="EMBL" id="CP000038">
    <property type="protein sequence ID" value="AAZ91011.1"/>
    <property type="molecule type" value="Genomic_DNA"/>
</dbReference>
<dbReference type="RefSeq" id="WP_000068679.1">
    <property type="nucleotide sequence ID" value="NC_007384.1"/>
</dbReference>
<dbReference type="SMR" id="Q3YU01"/>
<dbReference type="GeneID" id="93777452"/>
<dbReference type="KEGG" id="ssn:SSON_4543"/>
<dbReference type="HOGENOM" id="CLU_147939_0_0_6"/>
<dbReference type="Proteomes" id="UP000002529">
    <property type="component" value="Chromosome"/>
</dbReference>
<dbReference type="GO" id="GO:0005737">
    <property type="term" value="C:cytoplasm"/>
    <property type="evidence" value="ECO:0007669"/>
    <property type="project" value="UniProtKB-SubCell"/>
</dbReference>
<dbReference type="GO" id="GO:0003700">
    <property type="term" value="F:DNA-binding transcription factor activity"/>
    <property type="evidence" value="ECO:0007669"/>
    <property type="project" value="InterPro"/>
</dbReference>
<dbReference type="GO" id="GO:0043565">
    <property type="term" value="F:sequence-specific DNA binding"/>
    <property type="evidence" value="ECO:0007669"/>
    <property type="project" value="InterPro"/>
</dbReference>
<dbReference type="GO" id="GO:0045892">
    <property type="term" value="P:negative regulation of DNA-templated transcription"/>
    <property type="evidence" value="ECO:0007669"/>
    <property type="project" value="UniProtKB-UniRule"/>
</dbReference>
<dbReference type="FunFam" id="1.10.1270.10:FF:000001">
    <property type="entry name" value="Trp operon repressor"/>
    <property type="match status" value="1"/>
</dbReference>
<dbReference type="Gene3D" id="1.10.1270.10">
    <property type="entry name" value="TrpR-like"/>
    <property type="match status" value="1"/>
</dbReference>
<dbReference type="HAMAP" id="MF_00475">
    <property type="entry name" value="Trp_repressor"/>
    <property type="match status" value="1"/>
</dbReference>
<dbReference type="InterPro" id="IPR000831">
    <property type="entry name" value="Trp_repress"/>
</dbReference>
<dbReference type="InterPro" id="IPR013335">
    <property type="entry name" value="Trp_repress_bac"/>
</dbReference>
<dbReference type="InterPro" id="IPR010921">
    <property type="entry name" value="Trp_repressor/repl_initiator"/>
</dbReference>
<dbReference type="InterPro" id="IPR038116">
    <property type="entry name" value="TrpR-like_sf"/>
</dbReference>
<dbReference type="NCBIfam" id="TIGR01321">
    <property type="entry name" value="TrpR"/>
    <property type="match status" value="1"/>
</dbReference>
<dbReference type="PANTHER" id="PTHR38025">
    <property type="entry name" value="TRP OPERON REPRESSOR"/>
    <property type="match status" value="1"/>
</dbReference>
<dbReference type="PANTHER" id="PTHR38025:SF1">
    <property type="entry name" value="TRP OPERON REPRESSOR"/>
    <property type="match status" value="1"/>
</dbReference>
<dbReference type="Pfam" id="PF01371">
    <property type="entry name" value="Trp_repressor"/>
    <property type="match status" value="1"/>
</dbReference>
<dbReference type="PIRSF" id="PIRSF003196">
    <property type="entry name" value="Trp_repressor"/>
    <property type="match status" value="1"/>
</dbReference>
<dbReference type="SUPFAM" id="SSF48295">
    <property type="entry name" value="TrpR-like"/>
    <property type="match status" value="1"/>
</dbReference>
<gene>
    <name evidence="1" type="primary">trpR</name>
    <name type="ordered locus">SSON_4543</name>
</gene>
<proteinExistence type="inferred from homology"/>
<reference key="1">
    <citation type="journal article" date="2005" name="Nucleic Acids Res.">
        <title>Genome dynamics and diversity of Shigella species, the etiologic agents of bacillary dysentery.</title>
        <authorList>
            <person name="Yang F."/>
            <person name="Yang J."/>
            <person name="Zhang X."/>
            <person name="Chen L."/>
            <person name="Jiang Y."/>
            <person name="Yan Y."/>
            <person name="Tang X."/>
            <person name="Wang J."/>
            <person name="Xiong Z."/>
            <person name="Dong J."/>
            <person name="Xue Y."/>
            <person name="Zhu Y."/>
            <person name="Xu X."/>
            <person name="Sun L."/>
            <person name="Chen S."/>
            <person name="Nie H."/>
            <person name="Peng J."/>
            <person name="Xu J."/>
            <person name="Wang Y."/>
            <person name="Yuan Z."/>
            <person name="Wen Y."/>
            <person name="Yao Z."/>
            <person name="Shen Y."/>
            <person name="Qiang B."/>
            <person name="Hou Y."/>
            <person name="Yu J."/>
            <person name="Jin Q."/>
        </authorList>
    </citation>
    <scope>NUCLEOTIDE SEQUENCE [LARGE SCALE GENOMIC DNA]</scope>
    <source>
        <strain>Ss046</strain>
    </source>
</reference>
<evidence type="ECO:0000255" key="1">
    <source>
        <dbReference type="HAMAP-Rule" id="MF_00475"/>
    </source>
</evidence>
<accession>Q3YU01</accession>
<organism>
    <name type="scientific">Shigella sonnei (strain Ss046)</name>
    <dbReference type="NCBI Taxonomy" id="300269"/>
    <lineage>
        <taxon>Bacteria</taxon>
        <taxon>Pseudomonadati</taxon>
        <taxon>Pseudomonadota</taxon>
        <taxon>Gammaproteobacteria</taxon>
        <taxon>Enterobacterales</taxon>
        <taxon>Enterobacteriaceae</taxon>
        <taxon>Shigella</taxon>
    </lineage>
</organism>
<comment type="function">
    <text evidence="1">This protein is an aporepressor. When complexed with L-tryptophan it binds the operator region of the trp operon (5'-ACTAGT-'3') and prevents the initiation of transcription. The complex also regulates trp repressor biosynthesis by binding to its regulatory region.</text>
</comment>
<comment type="subunit">
    <text evidence="1">Homodimer.</text>
</comment>
<comment type="subcellular location">
    <subcellularLocation>
        <location evidence="1">Cytoplasm</location>
    </subcellularLocation>
</comment>
<comment type="similarity">
    <text evidence="1">Belongs to the TrpR family.</text>
</comment>
<feature type="chain" id="PRO_1000014051" description="Trp operon repressor">
    <location>
        <begin position="1"/>
        <end position="108"/>
    </location>
</feature>
<feature type="DNA-binding region" evidence="1">
    <location>
        <begin position="68"/>
        <end position="91"/>
    </location>
</feature>
<protein>
    <recommendedName>
        <fullName evidence="1">Trp operon repressor</fullName>
    </recommendedName>
</protein>
<sequence length="108" mass="12355">MAQQSPYSAAMAEQRHQEWLRFVDLLKNAYQNDLHLPLLNLMLTPDEREALGTRVRIVEELLRGEMSQRELKNELGAGIATITRGSNSLKAAPVELRQWLEEVLLKSD</sequence>